<name>ISPG_PARD8</name>
<accession>A6LGR5</accession>
<dbReference type="EC" id="1.17.7.3" evidence="1"/>
<dbReference type="EMBL" id="CP000140">
    <property type="protein sequence ID" value="ABR44879.1"/>
    <property type="molecule type" value="Genomic_DNA"/>
</dbReference>
<dbReference type="RefSeq" id="WP_005860039.1">
    <property type="nucleotide sequence ID" value="NZ_LR215978.1"/>
</dbReference>
<dbReference type="SMR" id="A6LGR5"/>
<dbReference type="STRING" id="435591.BDI_3173"/>
<dbReference type="PaxDb" id="435591-BDI_3173"/>
<dbReference type="KEGG" id="pdi:BDI_3173"/>
<dbReference type="eggNOG" id="COG0821">
    <property type="taxonomic scope" value="Bacteria"/>
</dbReference>
<dbReference type="HOGENOM" id="CLU_012689_0_0_10"/>
<dbReference type="BioCyc" id="PDIS435591:G1G5A-3253-MONOMER"/>
<dbReference type="UniPathway" id="UPA00056">
    <property type="reaction ID" value="UER00096"/>
</dbReference>
<dbReference type="Proteomes" id="UP000000566">
    <property type="component" value="Chromosome"/>
</dbReference>
<dbReference type="GO" id="GO:0051539">
    <property type="term" value="F:4 iron, 4 sulfur cluster binding"/>
    <property type="evidence" value="ECO:0007669"/>
    <property type="project" value="UniProtKB-UniRule"/>
</dbReference>
<dbReference type="GO" id="GO:0046429">
    <property type="term" value="F:4-hydroxy-3-methylbut-2-en-1-yl diphosphate synthase activity (ferredoxin)"/>
    <property type="evidence" value="ECO:0007669"/>
    <property type="project" value="UniProtKB-UniRule"/>
</dbReference>
<dbReference type="GO" id="GO:0141197">
    <property type="term" value="F:4-hydroxy-3-methylbut-2-enyl-diphosphate synthase activity (flavodoxin)"/>
    <property type="evidence" value="ECO:0007669"/>
    <property type="project" value="UniProtKB-EC"/>
</dbReference>
<dbReference type="GO" id="GO:0005506">
    <property type="term" value="F:iron ion binding"/>
    <property type="evidence" value="ECO:0007669"/>
    <property type="project" value="InterPro"/>
</dbReference>
<dbReference type="GO" id="GO:0019288">
    <property type="term" value="P:isopentenyl diphosphate biosynthetic process, methylerythritol 4-phosphate pathway"/>
    <property type="evidence" value="ECO:0007669"/>
    <property type="project" value="UniProtKB-UniRule"/>
</dbReference>
<dbReference type="GO" id="GO:0016114">
    <property type="term" value="P:terpenoid biosynthetic process"/>
    <property type="evidence" value="ECO:0007669"/>
    <property type="project" value="InterPro"/>
</dbReference>
<dbReference type="FunFam" id="3.20.20.20:FF:000005">
    <property type="entry name" value="4-hydroxy-3-methylbut-2-en-1-yl diphosphate synthase (flavodoxin)"/>
    <property type="match status" value="1"/>
</dbReference>
<dbReference type="FunFam" id="3.30.413.10:FF:000006">
    <property type="entry name" value="4-hydroxy-3-methylbut-2-en-1-yl diphosphate synthase (flavodoxin)"/>
    <property type="match status" value="1"/>
</dbReference>
<dbReference type="Gene3D" id="3.20.20.20">
    <property type="entry name" value="Dihydropteroate synthase-like"/>
    <property type="match status" value="1"/>
</dbReference>
<dbReference type="Gene3D" id="3.30.413.10">
    <property type="entry name" value="Sulfite Reductase Hemoprotein, domain 1"/>
    <property type="match status" value="1"/>
</dbReference>
<dbReference type="HAMAP" id="MF_00159">
    <property type="entry name" value="IspG"/>
    <property type="match status" value="1"/>
</dbReference>
<dbReference type="InterPro" id="IPR011005">
    <property type="entry name" value="Dihydropteroate_synth-like_sf"/>
</dbReference>
<dbReference type="InterPro" id="IPR017178">
    <property type="entry name" value="IspG_atypical"/>
</dbReference>
<dbReference type="InterPro" id="IPR004588">
    <property type="entry name" value="IspG_bac-typ"/>
</dbReference>
<dbReference type="InterPro" id="IPR045854">
    <property type="entry name" value="NO2/SO3_Rdtase_4Fe4S_sf"/>
</dbReference>
<dbReference type="NCBIfam" id="TIGR00612">
    <property type="entry name" value="ispG_gcpE"/>
    <property type="match status" value="1"/>
</dbReference>
<dbReference type="NCBIfam" id="NF002534">
    <property type="entry name" value="PRK02048.1"/>
    <property type="match status" value="1"/>
</dbReference>
<dbReference type="PANTHER" id="PTHR30454">
    <property type="entry name" value="4-HYDROXY-3-METHYLBUT-2-EN-1-YL DIPHOSPHATE SYNTHASE"/>
    <property type="match status" value="1"/>
</dbReference>
<dbReference type="PANTHER" id="PTHR30454:SF0">
    <property type="entry name" value="4-HYDROXY-3-METHYLBUT-2-EN-1-YL DIPHOSPHATE SYNTHASE (FERREDOXIN), CHLOROPLASTIC"/>
    <property type="match status" value="1"/>
</dbReference>
<dbReference type="Pfam" id="PF04551">
    <property type="entry name" value="GcpE"/>
    <property type="match status" value="2"/>
</dbReference>
<dbReference type="PIRSF" id="PIRSF037336">
    <property type="entry name" value="IspG_like"/>
    <property type="match status" value="1"/>
</dbReference>
<dbReference type="SUPFAM" id="SSF51717">
    <property type="entry name" value="Dihydropteroate synthetase-like"/>
    <property type="match status" value="1"/>
</dbReference>
<dbReference type="SUPFAM" id="SSF56014">
    <property type="entry name" value="Nitrite and sulphite reductase 4Fe-4S domain-like"/>
    <property type="match status" value="1"/>
</dbReference>
<gene>
    <name evidence="1" type="primary">ispG</name>
    <name type="ordered locus">BDI_3173</name>
</gene>
<proteinExistence type="inferred from homology"/>
<comment type="function">
    <text evidence="1">Converts 2C-methyl-D-erythritol 2,4-cyclodiphosphate (ME-2,4cPP) into 1-hydroxy-2-methyl-2-(E)-butenyl 4-diphosphate.</text>
</comment>
<comment type="catalytic activity">
    <reaction evidence="1">
        <text>(2E)-4-hydroxy-3-methylbut-2-enyl diphosphate + oxidized [flavodoxin] + H2O + 2 H(+) = 2-C-methyl-D-erythritol 2,4-cyclic diphosphate + reduced [flavodoxin]</text>
        <dbReference type="Rhea" id="RHEA:43604"/>
        <dbReference type="Rhea" id="RHEA-COMP:10622"/>
        <dbReference type="Rhea" id="RHEA-COMP:10623"/>
        <dbReference type="ChEBI" id="CHEBI:15377"/>
        <dbReference type="ChEBI" id="CHEBI:15378"/>
        <dbReference type="ChEBI" id="CHEBI:57618"/>
        <dbReference type="ChEBI" id="CHEBI:58210"/>
        <dbReference type="ChEBI" id="CHEBI:58483"/>
        <dbReference type="ChEBI" id="CHEBI:128753"/>
        <dbReference type="EC" id="1.17.7.3"/>
    </reaction>
</comment>
<comment type="cofactor">
    <cofactor evidence="1">
        <name>[4Fe-4S] cluster</name>
        <dbReference type="ChEBI" id="CHEBI:49883"/>
    </cofactor>
    <text evidence="1">Binds 1 [4Fe-4S] cluster.</text>
</comment>
<comment type="pathway">
    <text evidence="1">Isoprenoid biosynthesis; isopentenyl diphosphate biosynthesis via DXP pathway; isopentenyl diphosphate from 1-deoxy-D-xylulose 5-phosphate: step 5/6.</text>
</comment>
<comment type="similarity">
    <text evidence="1">Belongs to the IspG family.</text>
</comment>
<keyword id="KW-0004">4Fe-4S</keyword>
<keyword id="KW-0408">Iron</keyword>
<keyword id="KW-0411">Iron-sulfur</keyword>
<keyword id="KW-0414">Isoprene biosynthesis</keyword>
<keyword id="KW-0479">Metal-binding</keyword>
<keyword id="KW-0560">Oxidoreductase</keyword>
<keyword id="KW-1185">Reference proteome</keyword>
<protein>
    <recommendedName>
        <fullName evidence="1">4-hydroxy-3-methylbut-2-en-1-yl diphosphate synthase (flavodoxin)</fullName>
        <ecNumber evidence="1">1.17.7.3</ecNumber>
    </recommendedName>
    <alternativeName>
        <fullName evidence="1">1-hydroxy-2-methyl-2-(E)-butenyl 4-diphosphate synthase</fullName>
    </alternativeName>
</protein>
<feature type="chain" id="PRO_1000011492" description="4-hydroxy-3-methylbut-2-en-1-yl diphosphate synthase (flavodoxin)">
    <location>
        <begin position="1"/>
        <end position="611"/>
    </location>
</feature>
<feature type="binding site" evidence="1">
    <location>
        <position position="520"/>
    </location>
    <ligand>
        <name>[4Fe-4S] cluster</name>
        <dbReference type="ChEBI" id="CHEBI:49883"/>
    </ligand>
</feature>
<feature type="binding site" evidence="1">
    <location>
        <position position="523"/>
    </location>
    <ligand>
        <name>[4Fe-4S] cluster</name>
        <dbReference type="ChEBI" id="CHEBI:49883"/>
    </ligand>
</feature>
<feature type="binding site" evidence="1">
    <location>
        <position position="554"/>
    </location>
    <ligand>
        <name>[4Fe-4S] cluster</name>
        <dbReference type="ChEBI" id="CHEBI:49883"/>
    </ligand>
</feature>
<feature type="binding site" evidence="1">
    <location>
        <position position="561"/>
    </location>
    <ligand>
        <name>[4Fe-4S] cluster</name>
        <dbReference type="ChEBI" id="CHEBI:49883"/>
    </ligand>
</feature>
<evidence type="ECO:0000255" key="1">
    <source>
        <dbReference type="HAMAP-Rule" id="MF_00159"/>
    </source>
</evidence>
<sequence>MAYFNYNRRKSSVAQIGDTPMGGENPIRIQSMANVSTMDTEAAVAQAIRMIEAGAEYVRFTAQGEREARNLGEIRKQLNEQGYTTPLVADIHFNPRAADAAAGEVEKVRINPGNYVDKVKTFSHLEYTDEEYAAEIEKIRERFVPFLNICKAHGTAIRIGVNHGSLSDRIMSRYGDTPEGMVASCMEFLRICREENFPDVVISIKASNTVVMVRTVRLLVRTMEAENMHYPLHLGVTEAGDGEDGRIKSAVGIGTLLCDGIGDTIRVSLSEDPEAEMPVARKLVDYIRERENHRPIEASMAPGFDTVATSRRISRVVEGIGGTFSPVVISDRSSGDFEFDYLSLPDYIYIGKEDPDNLPDNFRLLVDAHFWKERPNAFPCFIASEAEELKDYDCPLKFIRLTYMDLTDRMLEILKADKTVVVLLSTHHRNGVGSQRAAMHKLLMAGCDVPVVLHRDFRETDVELLQLKSAADFGTLLLDGFGDGLMLHNEGCEAVVSDRCMFGILQATRTRISKTEYISCPSCGRTLYDLQTTIARIKEATSHLKGLKIGIMGCIVNGPGEMADADYGYVGAGRGQISLYKGKECVLKNIPEEDAVERLVQLIKENGDWVN</sequence>
<reference key="1">
    <citation type="journal article" date="2007" name="PLoS Biol.">
        <title>Evolution of symbiotic bacteria in the distal human intestine.</title>
        <authorList>
            <person name="Xu J."/>
            <person name="Mahowald M.A."/>
            <person name="Ley R.E."/>
            <person name="Lozupone C.A."/>
            <person name="Hamady M."/>
            <person name="Martens E.C."/>
            <person name="Henrissat B."/>
            <person name="Coutinho P.M."/>
            <person name="Minx P."/>
            <person name="Latreille P."/>
            <person name="Cordum H."/>
            <person name="Van Brunt A."/>
            <person name="Kim K."/>
            <person name="Fulton R.S."/>
            <person name="Fulton L.A."/>
            <person name="Clifton S.W."/>
            <person name="Wilson R.K."/>
            <person name="Knight R.D."/>
            <person name="Gordon J.I."/>
        </authorList>
    </citation>
    <scope>NUCLEOTIDE SEQUENCE [LARGE SCALE GENOMIC DNA]</scope>
    <source>
        <strain>ATCC 8503 / DSM 20701 / CIP 104284 / JCM 5825 / NCTC 11152</strain>
    </source>
</reference>
<organism>
    <name type="scientific">Parabacteroides distasonis (strain ATCC 8503 / DSM 20701 / CIP 104284 / JCM 5825 / NCTC 11152)</name>
    <dbReference type="NCBI Taxonomy" id="435591"/>
    <lineage>
        <taxon>Bacteria</taxon>
        <taxon>Pseudomonadati</taxon>
        <taxon>Bacteroidota</taxon>
        <taxon>Bacteroidia</taxon>
        <taxon>Bacteroidales</taxon>
        <taxon>Tannerellaceae</taxon>
        <taxon>Parabacteroides</taxon>
    </lineage>
</organism>